<dbReference type="EC" id="2.7.7.3" evidence="1"/>
<dbReference type="EMBL" id="AE006470">
    <property type="protein sequence ID" value="AAM72200.1"/>
    <property type="molecule type" value="Genomic_DNA"/>
</dbReference>
<dbReference type="RefSeq" id="NP_661858.1">
    <property type="nucleotide sequence ID" value="NC_002932.3"/>
</dbReference>
<dbReference type="RefSeq" id="WP_010932645.1">
    <property type="nucleotide sequence ID" value="NC_002932.3"/>
</dbReference>
<dbReference type="SMR" id="Q8KDS9"/>
<dbReference type="STRING" id="194439.CT0965"/>
<dbReference type="EnsemblBacteria" id="AAM72200">
    <property type="protein sequence ID" value="AAM72200"/>
    <property type="gene ID" value="CT0965"/>
</dbReference>
<dbReference type="KEGG" id="cte:CT0965"/>
<dbReference type="PATRIC" id="fig|194439.7.peg.875"/>
<dbReference type="eggNOG" id="COG0669">
    <property type="taxonomic scope" value="Bacteria"/>
</dbReference>
<dbReference type="HOGENOM" id="CLU_100149_0_1_10"/>
<dbReference type="OrthoDB" id="9806661at2"/>
<dbReference type="UniPathway" id="UPA00241">
    <property type="reaction ID" value="UER00355"/>
</dbReference>
<dbReference type="Proteomes" id="UP000001007">
    <property type="component" value="Chromosome"/>
</dbReference>
<dbReference type="GO" id="GO:0005737">
    <property type="term" value="C:cytoplasm"/>
    <property type="evidence" value="ECO:0007669"/>
    <property type="project" value="UniProtKB-SubCell"/>
</dbReference>
<dbReference type="GO" id="GO:0005524">
    <property type="term" value="F:ATP binding"/>
    <property type="evidence" value="ECO:0007669"/>
    <property type="project" value="UniProtKB-KW"/>
</dbReference>
<dbReference type="GO" id="GO:0004595">
    <property type="term" value="F:pantetheine-phosphate adenylyltransferase activity"/>
    <property type="evidence" value="ECO:0007669"/>
    <property type="project" value="UniProtKB-UniRule"/>
</dbReference>
<dbReference type="GO" id="GO:0015937">
    <property type="term" value="P:coenzyme A biosynthetic process"/>
    <property type="evidence" value="ECO:0007669"/>
    <property type="project" value="UniProtKB-UniRule"/>
</dbReference>
<dbReference type="CDD" id="cd02163">
    <property type="entry name" value="PPAT"/>
    <property type="match status" value="1"/>
</dbReference>
<dbReference type="Gene3D" id="3.40.50.620">
    <property type="entry name" value="HUPs"/>
    <property type="match status" value="1"/>
</dbReference>
<dbReference type="HAMAP" id="MF_00151">
    <property type="entry name" value="PPAT_bact"/>
    <property type="match status" value="1"/>
</dbReference>
<dbReference type="InterPro" id="IPR004821">
    <property type="entry name" value="Cyt_trans-like"/>
</dbReference>
<dbReference type="InterPro" id="IPR001980">
    <property type="entry name" value="PPAT"/>
</dbReference>
<dbReference type="InterPro" id="IPR014729">
    <property type="entry name" value="Rossmann-like_a/b/a_fold"/>
</dbReference>
<dbReference type="NCBIfam" id="TIGR01510">
    <property type="entry name" value="coaD_prev_kdtB"/>
    <property type="match status" value="1"/>
</dbReference>
<dbReference type="NCBIfam" id="TIGR00125">
    <property type="entry name" value="cyt_tran_rel"/>
    <property type="match status" value="1"/>
</dbReference>
<dbReference type="PANTHER" id="PTHR21342">
    <property type="entry name" value="PHOSPHOPANTETHEINE ADENYLYLTRANSFERASE"/>
    <property type="match status" value="1"/>
</dbReference>
<dbReference type="PANTHER" id="PTHR21342:SF1">
    <property type="entry name" value="PHOSPHOPANTETHEINE ADENYLYLTRANSFERASE"/>
    <property type="match status" value="1"/>
</dbReference>
<dbReference type="Pfam" id="PF01467">
    <property type="entry name" value="CTP_transf_like"/>
    <property type="match status" value="1"/>
</dbReference>
<dbReference type="PRINTS" id="PR01020">
    <property type="entry name" value="LPSBIOSNTHSS"/>
</dbReference>
<dbReference type="SUPFAM" id="SSF52374">
    <property type="entry name" value="Nucleotidylyl transferase"/>
    <property type="match status" value="1"/>
</dbReference>
<name>COAD_CHLTE</name>
<reference key="1">
    <citation type="journal article" date="2002" name="Proc. Natl. Acad. Sci. U.S.A.">
        <title>The complete genome sequence of Chlorobium tepidum TLS, a photosynthetic, anaerobic, green-sulfur bacterium.</title>
        <authorList>
            <person name="Eisen J.A."/>
            <person name="Nelson K.E."/>
            <person name="Paulsen I.T."/>
            <person name="Heidelberg J.F."/>
            <person name="Wu M."/>
            <person name="Dodson R.J."/>
            <person name="DeBoy R.T."/>
            <person name="Gwinn M.L."/>
            <person name="Nelson W.C."/>
            <person name="Haft D.H."/>
            <person name="Hickey E.K."/>
            <person name="Peterson J.D."/>
            <person name="Durkin A.S."/>
            <person name="Kolonay J.F."/>
            <person name="Yang F."/>
            <person name="Holt I.E."/>
            <person name="Umayam L.A."/>
            <person name="Mason T.M."/>
            <person name="Brenner M."/>
            <person name="Shea T.P."/>
            <person name="Parksey D.S."/>
            <person name="Nierman W.C."/>
            <person name="Feldblyum T.V."/>
            <person name="Hansen C.L."/>
            <person name="Craven M.B."/>
            <person name="Radune D."/>
            <person name="Vamathevan J.J."/>
            <person name="Khouri H.M."/>
            <person name="White O."/>
            <person name="Gruber T.M."/>
            <person name="Ketchum K.A."/>
            <person name="Venter J.C."/>
            <person name="Tettelin H."/>
            <person name="Bryant D.A."/>
            <person name="Fraser C.M."/>
        </authorList>
    </citation>
    <scope>NUCLEOTIDE SEQUENCE [LARGE SCALE GENOMIC DNA]</scope>
    <source>
        <strain>ATCC 49652 / DSM 12025 / NBRC 103806 / TLS</strain>
    </source>
</reference>
<feature type="chain" id="PRO_0000156191" description="Phosphopantetheine adenylyltransferase">
    <location>
        <begin position="1"/>
        <end position="165"/>
    </location>
</feature>
<feature type="binding site" evidence="1">
    <location>
        <begin position="10"/>
        <end position="11"/>
    </location>
    <ligand>
        <name>ATP</name>
        <dbReference type="ChEBI" id="CHEBI:30616"/>
    </ligand>
</feature>
<feature type="binding site" evidence="1">
    <location>
        <position position="10"/>
    </location>
    <ligand>
        <name>substrate</name>
    </ligand>
</feature>
<feature type="binding site" evidence="1">
    <location>
        <position position="18"/>
    </location>
    <ligand>
        <name>ATP</name>
        <dbReference type="ChEBI" id="CHEBI:30616"/>
    </ligand>
</feature>
<feature type="binding site" evidence="1">
    <location>
        <position position="42"/>
    </location>
    <ligand>
        <name>substrate</name>
    </ligand>
</feature>
<feature type="binding site" evidence="1">
    <location>
        <position position="75"/>
    </location>
    <ligand>
        <name>substrate</name>
    </ligand>
</feature>
<feature type="binding site" evidence="1">
    <location>
        <position position="89"/>
    </location>
    <ligand>
        <name>substrate</name>
    </ligand>
</feature>
<feature type="binding site" evidence="1">
    <location>
        <begin position="90"/>
        <end position="92"/>
    </location>
    <ligand>
        <name>ATP</name>
        <dbReference type="ChEBI" id="CHEBI:30616"/>
    </ligand>
</feature>
<feature type="binding site" evidence="1">
    <location>
        <position position="100"/>
    </location>
    <ligand>
        <name>ATP</name>
        <dbReference type="ChEBI" id="CHEBI:30616"/>
    </ligand>
</feature>
<feature type="binding site" evidence="1">
    <location>
        <begin position="125"/>
        <end position="131"/>
    </location>
    <ligand>
        <name>ATP</name>
        <dbReference type="ChEBI" id="CHEBI:30616"/>
    </ligand>
</feature>
<feature type="site" description="Transition state stabilizer" evidence="1">
    <location>
        <position position="18"/>
    </location>
</feature>
<evidence type="ECO:0000255" key="1">
    <source>
        <dbReference type="HAMAP-Rule" id="MF_00151"/>
    </source>
</evidence>
<accession>Q8KDS9</accession>
<proteinExistence type="inferred from homology"/>
<organism>
    <name type="scientific">Chlorobaculum tepidum (strain ATCC 49652 / DSM 12025 / NBRC 103806 / TLS)</name>
    <name type="common">Chlorobium tepidum</name>
    <dbReference type="NCBI Taxonomy" id="194439"/>
    <lineage>
        <taxon>Bacteria</taxon>
        <taxon>Pseudomonadati</taxon>
        <taxon>Chlorobiota</taxon>
        <taxon>Chlorobiia</taxon>
        <taxon>Chlorobiales</taxon>
        <taxon>Chlorobiaceae</taxon>
        <taxon>Chlorobaculum</taxon>
    </lineage>
</organism>
<gene>
    <name evidence="1" type="primary">coaD</name>
    <name type="synonym">kdtB</name>
    <name type="ordered locus">CT0965</name>
</gene>
<keyword id="KW-0067">ATP-binding</keyword>
<keyword id="KW-0173">Coenzyme A biosynthesis</keyword>
<keyword id="KW-0963">Cytoplasm</keyword>
<keyword id="KW-0460">Magnesium</keyword>
<keyword id="KW-0547">Nucleotide-binding</keyword>
<keyword id="KW-0548">Nucleotidyltransferase</keyword>
<keyword id="KW-1185">Reference proteome</keyword>
<keyword id="KW-0808">Transferase</keyword>
<protein>
    <recommendedName>
        <fullName evidence="1">Phosphopantetheine adenylyltransferase</fullName>
        <ecNumber evidence="1">2.7.7.3</ecNumber>
    </recommendedName>
    <alternativeName>
        <fullName evidence="1">Dephospho-CoA pyrophosphorylase</fullName>
    </alternativeName>
    <alternativeName>
        <fullName evidence="1">Pantetheine-phosphate adenylyltransferase</fullName>
        <shortName evidence="1">PPAT</shortName>
    </alternativeName>
</protein>
<sequence>MSKKAIYPGTFDPFTNGHLDVLERALNIFEHVDVVLAENSQKQTLFSVEERFDMVREVVRDLPNVSVDVLREGLLADYARQAGASAIVRGVRQVKDFEYEFQMSLLNRHLYPEVTTVFLMPNVKYTYVASTIIREVSMLGGDVSKFVHPYVLDQLSRKRAERRAH</sequence>
<comment type="function">
    <text evidence="1">Reversibly transfers an adenylyl group from ATP to 4'-phosphopantetheine, yielding dephospho-CoA (dPCoA) and pyrophosphate.</text>
</comment>
<comment type="catalytic activity">
    <reaction evidence="1">
        <text>(R)-4'-phosphopantetheine + ATP + H(+) = 3'-dephospho-CoA + diphosphate</text>
        <dbReference type="Rhea" id="RHEA:19801"/>
        <dbReference type="ChEBI" id="CHEBI:15378"/>
        <dbReference type="ChEBI" id="CHEBI:30616"/>
        <dbReference type="ChEBI" id="CHEBI:33019"/>
        <dbReference type="ChEBI" id="CHEBI:57328"/>
        <dbReference type="ChEBI" id="CHEBI:61723"/>
        <dbReference type="EC" id="2.7.7.3"/>
    </reaction>
</comment>
<comment type="cofactor">
    <cofactor evidence="1">
        <name>Mg(2+)</name>
        <dbReference type="ChEBI" id="CHEBI:18420"/>
    </cofactor>
</comment>
<comment type="pathway">
    <text evidence="1">Cofactor biosynthesis; coenzyme A biosynthesis; CoA from (R)-pantothenate: step 4/5.</text>
</comment>
<comment type="subunit">
    <text evidence="1">Homohexamer.</text>
</comment>
<comment type="subcellular location">
    <subcellularLocation>
        <location evidence="1">Cytoplasm</location>
    </subcellularLocation>
</comment>
<comment type="similarity">
    <text evidence="1">Belongs to the bacterial CoaD family.</text>
</comment>